<name>MECA_LEUMM</name>
<reference key="1">
    <citation type="journal article" date="2006" name="Proc. Natl. Acad. Sci. U.S.A.">
        <title>Comparative genomics of the lactic acid bacteria.</title>
        <authorList>
            <person name="Makarova K.S."/>
            <person name="Slesarev A."/>
            <person name="Wolf Y.I."/>
            <person name="Sorokin A."/>
            <person name="Mirkin B."/>
            <person name="Koonin E.V."/>
            <person name="Pavlov A."/>
            <person name="Pavlova N."/>
            <person name="Karamychev V."/>
            <person name="Polouchine N."/>
            <person name="Shakhova V."/>
            <person name="Grigoriev I."/>
            <person name="Lou Y."/>
            <person name="Rohksar D."/>
            <person name="Lucas S."/>
            <person name="Huang K."/>
            <person name="Goodstein D.M."/>
            <person name="Hawkins T."/>
            <person name="Plengvidhya V."/>
            <person name="Welker D."/>
            <person name="Hughes J."/>
            <person name="Goh Y."/>
            <person name="Benson A."/>
            <person name="Baldwin K."/>
            <person name="Lee J.-H."/>
            <person name="Diaz-Muniz I."/>
            <person name="Dosti B."/>
            <person name="Smeianov V."/>
            <person name="Wechter W."/>
            <person name="Barabote R."/>
            <person name="Lorca G."/>
            <person name="Altermann E."/>
            <person name="Barrangou R."/>
            <person name="Ganesan B."/>
            <person name="Xie Y."/>
            <person name="Rawsthorne H."/>
            <person name="Tamir D."/>
            <person name="Parker C."/>
            <person name="Breidt F."/>
            <person name="Broadbent J.R."/>
            <person name="Hutkins R."/>
            <person name="O'Sullivan D."/>
            <person name="Steele J."/>
            <person name="Unlu G."/>
            <person name="Saier M.H. Jr."/>
            <person name="Klaenhammer T."/>
            <person name="Richardson P."/>
            <person name="Kozyavkin S."/>
            <person name="Weimer B.C."/>
            <person name="Mills D.A."/>
        </authorList>
    </citation>
    <scope>NUCLEOTIDE SEQUENCE [LARGE SCALE GENOMIC DNA]</scope>
    <source>
        <strain>ATCC 8293 / DSM 20343 / BCRC 11652 / CCM 1803 / JCM 6124 / NCDO 523 / NBRC 100496 / NCIMB 8023 / NCTC 12954 / NRRL B-1118 / 37Y</strain>
    </source>
</reference>
<protein>
    <recommendedName>
        <fullName evidence="1">Adapter protein MecA</fullName>
    </recommendedName>
</protein>
<feature type="chain" id="PRO_1000065342" description="Adapter protein MecA">
    <location>
        <begin position="1"/>
        <end position="235"/>
    </location>
</feature>
<feature type="region of interest" description="Disordered" evidence="2">
    <location>
        <begin position="113"/>
        <end position="136"/>
    </location>
</feature>
<feature type="compositionally biased region" description="Basic and acidic residues" evidence="2">
    <location>
        <begin position="113"/>
        <end position="135"/>
    </location>
</feature>
<accession>Q03VH8</accession>
<evidence type="ECO:0000255" key="1">
    <source>
        <dbReference type="HAMAP-Rule" id="MF_01124"/>
    </source>
</evidence>
<evidence type="ECO:0000256" key="2">
    <source>
        <dbReference type="SAM" id="MobiDB-lite"/>
    </source>
</evidence>
<keyword id="KW-1185">Reference proteome</keyword>
<organism>
    <name type="scientific">Leuconostoc mesenteroides subsp. mesenteroides (strain ATCC 8293 / DSM 20343 / BCRC 11652 / CCM 1803 / JCM 6124 / NCDO 523 / NBRC 100496 / NCIMB 8023 / NCTC 12954 / NRRL B-1118 / 37Y)</name>
    <dbReference type="NCBI Taxonomy" id="203120"/>
    <lineage>
        <taxon>Bacteria</taxon>
        <taxon>Bacillati</taxon>
        <taxon>Bacillota</taxon>
        <taxon>Bacilli</taxon>
        <taxon>Lactobacillales</taxon>
        <taxon>Lactobacillaceae</taxon>
        <taxon>Leuconostoc</taxon>
    </lineage>
</organism>
<sequence length="235" mass="27002">MEKERINENTIRVMIDNSDLKDRGITVMELLGNHEKIESFFYNILSEVDTEHDFEDDDQVSFQILPNRNGLELFISRLDEENKISDILDNITNFSSKQPANIDNISDKRRQELRQSDKGDIVKSKVSSSDHKDGSQENFENTQVILALSDFENAIAIANSLKIENLVSDLYLYEGAYYLNLLVPDHSVSQEQLKNELAIALEFSRISHVTHEVLHEHGQLILKHEALEKIKSLFS</sequence>
<dbReference type="EMBL" id="CP000414">
    <property type="protein sequence ID" value="ABJ62794.1"/>
    <property type="molecule type" value="Genomic_DNA"/>
</dbReference>
<dbReference type="RefSeq" id="WP_011680318.1">
    <property type="nucleotide sequence ID" value="NC_008531.1"/>
</dbReference>
<dbReference type="SMR" id="Q03VH8"/>
<dbReference type="EnsemblBacteria" id="ABJ62794">
    <property type="protein sequence ID" value="ABJ62794"/>
    <property type="gene ID" value="LEUM_1703"/>
</dbReference>
<dbReference type="GeneID" id="29577227"/>
<dbReference type="KEGG" id="lme:LEUM_1703"/>
<dbReference type="eggNOG" id="COG4862">
    <property type="taxonomic scope" value="Bacteria"/>
</dbReference>
<dbReference type="HOGENOM" id="CLU_071496_2_0_9"/>
<dbReference type="Proteomes" id="UP000000362">
    <property type="component" value="Chromosome"/>
</dbReference>
<dbReference type="GO" id="GO:0030674">
    <property type="term" value="F:protein-macromolecule adaptor activity"/>
    <property type="evidence" value="ECO:0007669"/>
    <property type="project" value="UniProtKB-UniRule"/>
</dbReference>
<dbReference type="Gene3D" id="3.30.70.1950">
    <property type="match status" value="1"/>
</dbReference>
<dbReference type="HAMAP" id="MF_01124">
    <property type="entry name" value="MecA"/>
    <property type="match status" value="1"/>
</dbReference>
<dbReference type="InterPro" id="IPR038471">
    <property type="entry name" value="MecA_C_sf"/>
</dbReference>
<dbReference type="InterPro" id="IPR008681">
    <property type="entry name" value="Neg-reg_MecA"/>
</dbReference>
<dbReference type="PANTHER" id="PTHR39161">
    <property type="entry name" value="ADAPTER PROTEIN MECA"/>
    <property type="match status" value="1"/>
</dbReference>
<dbReference type="PANTHER" id="PTHR39161:SF1">
    <property type="entry name" value="ADAPTER PROTEIN MECA 1"/>
    <property type="match status" value="1"/>
</dbReference>
<dbReference type="Pfam" id="PF05389">
    <property type="entry name" value="MecA"/>
    <property type="match status" value="1"/>
</dbReference>
<dbReference type="PIRSF" id="PIRSF029008">
    <property type="entry name" value="MecA"/>
    <property type="match status" value="1"/>
</dbReference>
<proteinExistence type="inferred from homology"/>
<comment type="function">
    <text evidence="1">Enables the recognition and targeting of unfolded and aggregated proteins to the ClpC protease or to other proteins involved in proteolysis.</text>
</comment>
<comment type="subunit">
    <text evidence="1">Homodimer.</text>
</comment>
<comment type="domain">
    <text>The N-terminal domain probably binds unfolded/aggregated proteins; the C-terminal domain interacts with ClpC.</text>
</comment>
<comment type="similarity">
    <text evidence="1">Belongs to the MecA family.</text>
</comment>
<gene>
    <name evidence="1" type="primary">mecA</name>
    <name type="ordered locus">LEUM_1703</name>
</gene>